<gene>
    <name evidence="5" type="primary">stuA</name>
    <name type="ORF">AFLA_046990</name>
</gene>
<dbReference type="EMBL" id="EQ963476">
    <property type="protein sequence ID" value="EED52997.1"/>
    <property type="molecule type" value="Genomic_DNA"/>
</dbReference>
<dbReference type="RefSeq" id="XP_002378161.1">
    <property type="nucleotide sequence ID" value="XM_002378120.1"/>
</dbReference>
<dbReference type="SMR" id="B8NBX4"/>
<dbReference type="STRING" id="332952.B8NBX4"/>
<dbReference type="EnsemblFungi" id="EED52997">
    <property type="protein sequence ID" value="EED52997"/>
    <property type="gene ID" value="AFLA_046990"/>
</dbReference>
<dbReference type="VEuPathDB" id="FungiDB:AFLA_008298"/>
<dbReference type="eggNOG" id="ENOG502QW2C">
    <property type="taxonomic scope" value="Eukaryota"/>
</dbReference>
<dbReference type="HOGENOM" id="CLU_016460_0_0_1"/>
<dbReference type="OMA" id="HEAEYTH"/>
<dbReference type="PHI-base" id="PHI:7727"/>
<dbReference type="GO" id="GO:0005634">
    <property type="term" value="C:nucleus"/>
    <property type="evidence" value="ECO:0007669"/>
    <property type="project" value="UniProtKB-SubCell"/>
</dbReference>
<dbReference type="GO" id="GO:0003700">
    <property type="term" value="F:DNA-binding transcription factor activity"/>
    <property type="evidence" value="ECO:0007669"/>
    <property type="project" value="TreeGrafter"/>
</dbReference>
<dbReference type="GO" id="GO:0043565">
    <property type="term" value="F:sequence-specific DNA binding"/>
    <property type="evidence" value="ECO:0007669"/>
    <property type="project" value="TreeGrafter"/>
</dbReference>
<dbReference type="GO" id="GO:0048315">
    <property type="term" value="P:conidium formation"/>
    <property type="evidence" value="ECO:0007669"/>
    <property type="project" value="UniProtKB-KW"/>
</dbReference>
<dbReference type="GO" id="GO:0045944">
    <property type="term" value="P:positive regulation of transcription by RNA polymerase II"/>
    <property type="evidence" value="ECO:0007669"/>
    <property type="project" value="TreeGrafter"/>
</dbReference>
<dbReference type="GO" id="GO:0030435">
    <property type="term" value="P:sporulation resulting in formation of a cellular spore"/>
    <property type="evidence" value="ECO:0007669"/>
    <property type="project" value="UniProtKB-KW"/>
</dbReference>
<dbReference type="FunFam" id="3.10.260.10:FF:000003">
    <property type="entry name" value="Ascospore maturation 1 protein"/>
    <property type="match status" value="1"/>
</dbReference>
<dbReference type="Gene3D" id="3.10.260.10">
    <property type="entry name" value="Transcription regulator HTH, APSES-type DNA-binding domain"/>
    <property type="match status" value="1"/>
</dbReference>
<dbReference type="InterPro" id="IPR029790">
    <property type="entry name" value="EFG1/Phd1/StuA"/>
</dbReference>
<dbReference type="InterPro" id="IPR036887">
    <property type="entry name" value="HTH_APSES_sf"/>
</dbReference>
<dbReference type="InterPro" id="IPR018004">
    <property type="entry name" value="KilA/APSES_HTH"/>
</dbReference>
<dbReference type="InterPro" id="IPR003163">
    <property type="entry name" value="Tscrpt_reg_HTH_APSES-type"/>
</dbReference>
<dbReference type="PANTHER" id="PTHR47792">
    <property type="entry name" value="PROTEIN SOK2-RELATED"/>
    <property type="match status" value="1"/>
</dbReference>
<dbReference type="PANTHER" id="PTHR47792:SF1">
    <property type="entry name" value="PROTEIN SOK2-RELATED"/>
    <property type="match status" value="1"/>
</dbReference>
<dbReference type="Pfam" id="PF04383">
    <property type="entry name" value="KilA-N"/>
    <property type="match status" value="1"/>
</dbReference>
<dbReference type="SMART" id="SM01252">
    <property type="entry name" value="KilA-N"/>
    <property type="match status" value="1"/>
</dbReference>
<dbReference type="SUPFAM" id="SSF54616">
    <property type="entry name" value="DNA-binding domain of Mlu1-box binding protein MBP1"/>
    <property type="match status" value="1"/>
</dbReference>
<dbReference type="PROSITE" id="PS51299">
    <property type="entry name" value="HTH_APSES"/>
    <property type="match status" value="1"/>
</dbReference>
<feature type="chain" id="PRO_0000435971" description="Cell pattern formation-associated protein stuA">
    <location>
        <begin position="1"/>
        <end position="789"/>
    </location>
</feature>
<feature type="domain" description="HTH APSES-type" evidence="2">
    <location>
        <begin position="272"/>
        <end position="378"/>
    </location>
</feature>
<feature type="DNA-binding region" description="H-T-H motif" evidence="2">
    <location>
        <begin position="306"/>
        <end position="327"/>
    </location>
</feature>
<feature type="region of interest" description="Disordered" evidence="3">
    <location>
        <begin position="50"/>
        <end position="131"/>
    </location>
</feature>
<feature type="region of interest" description="Disordered" evidence="3">
    <location>
        <begin position="205"/>
        <end position="224"/>
    </location>
</feature>
<feature type="region of interest" description="Disordered" evidence="3">
    <location>
        <begin position="389"/>
        <end position="459"/>
    </location>
</feature>
<feature type="region of interest" description="Disordered" evidence="3">
    <location>
        <begin position="487"/>
        <end position="543"/>
    </location>
</feature>
<feature type="region of interest" description="Disordered" evidence="3">
    <location>
        <begin position="616"/>
        <end position="789"/>
    </location>
</feature>
<feature type="region of interest" description="Nuclear localization domain" evidence="1">
    <location>
        <begin position="731"/>
        <end position="758"/>
    </location>
</feature>
<feature type="compositionally biased region" description="Polar residues" evidence="3">
    <location>
        <begin position="55"/>
        <end position="69"/>
    </location>
</feature>
<feature type="compositionally biased region" description="Polar residues" evidence="3">
    <location>
        <begin position="76"/>
        <end position="88"/>
    </location>
</feature>
<feature type="compositionally biased region" description="Polar residues" evidence="3">
    <location>
        <begin position="115"/>
        <end position="131"/>
    </location>
</feature>
<feature type="compositionally biased region" description="Polar residues" evidence="3">
    <location>
        <begin position="419"/>
        <end position="438"/>
    </location>
</feature>
<feature type="compositionally biased region" description="Polar residues" evidence="3">
    <location>
        <begin position="487"/>
        <end position="529"/>
    </location>
</feature>
<feature type="compositionally biased region" description="Polar residues" evidence="3">
    <location>
        <begin position="620"/>
        <end position="636"/>
    </location>
</feature>
<feature type="compositionally biased region" description="Polar residues" evidence="3">
    <location>
        <begin position="645"/>
        <end position="667"/>
    </location>
</feature>
<feature type="compositionally biased region" description="Polar residues" evidence="3">
    <location>
        <begin position="676"/>
        <end position="713"/>
    </location>
</feature>
<feature type="compositionally biased region" description="Basic and acidic residues" evidence="3">
    <location>
        <begin position="741"/>
        <end position="754"/>
    </location>
</feature>
<protein>
    <recommendedName>
        <fullName evidence="6">Cell pattern formation-associated protein stuA</fullName>
    </recommendedName>
    <alternativeName>
        <fullName evidence="1">Stunted protein A</fullName>
    </alternativeName>
</protein>
<comment type="function">
    <text evidence="1">Transcription factor that regulates asexual reproduction (By similarity). Binds the StuA-response elements (StRE) with the consensus sequence 5'-(A/T)CGCG(T/A)N(A/C)-3' at the promoters of target genes (By similarity).</text>
</comment>
<comment type="subcellular location">
    <subcellularLocation>
        <location evidence="1">Nucleus</location>
    </subcellularLocation>
</comment>
<comment type="induction">
    <text evidence="4">Expression is down-regulated by resveratrol (PubMed:26420172).</text>
</comment>
<comment type="similarity">
    <text evidence="6">Belongs to the EFG1/PHD1/stuA family.</text>
</comment>
<keyword id="KW-0183">Conidiation</keyword>
<keyword id="KW-0238">DNA-binding</keyword>
<keyword id="KW-0539">Nucleus</keyword>
<keyword id="KW-0749">Sporulation</keyword>
<keyword id="KW-0804">Transcription</keyword>
<keyword id="KW-0805">Transcription regulation</keyword>
<sequence length="789" mass="83836">MLPCCEPLPLQTEKLELPSISQVHTRGPVDIPWYNHHAAERPLLSGDKLPALSLPTASQPPISGQSYRTSYEEASASHNASARTSLSGTAPVINEARSPPQSADLAAGGQGRLSLDSSAPQEFSIPQNTVGDSYYTNPTAIGSMNHTQPYMDVHSSHLSSAQPYASQAATAGGIAHYPQYHQQPPVLQPASTTYGPASSYQYAYPGGVTSSQPGPQPPTTSVSSQVPAQLLPLPVTSHTVAPAGYGNNTGTPMQGYVYDATGQVAPPGAKPRVTATLWEDEGSLCYQVEARGVCVARREDNHMINGTKLLNVAGMTRGRRDGILKSEKVRHVVKIGPMHLKGVWIPFERALEFANKEKITDLLYPLFVHNIGGLLYHPTNQTRTNMVVQESQQRRLEGPQATRASQGPQPPALHHHHSLQTPVPSHMSQPHAMTSQSAARPGLDRAHTFPTPPASASSLMGITNQGSSYEWGNQGMNSGVPNTQPLSIDTTLSNARSMPTTPATTPPGSNMQGMQAYQSQSGYDNSKSYYSAAPPSHPQYAPQQPLTQPMAPYGQTMPANTYIKNDMAPPTARTSGGPSDVEQADVKADRYAQTNGHVSNGAGEPVPEHEPEYVQHDSAGYNTNRGSYTYTTNPSVGSLAGDHSQLASDMSGSPSQQNGSGRMTPRTSGAPPQWASGYNTPPRSAAVSSLYNSVSETRGASANGTTDNYSVASNPAPGYSTGMNGPLGSGKRMREDDDVDQIVRPDSRGAEYESKRRKTLTEATVGGPVGGVPLGLQPMKAGGVMARRR</sequence>
<proteinExistence type="evidence at transcript level"/>
<accession>B8NBX4</accession>
<reference key="1">
    <citation type="journal article" date="2015" name="Genome Announc.">
        <title>Genome sequence of Aspergillus flavus NRRL 3357, a strain that causes aflatoxin contamination of food and feed.</title>
        <authorList>
            <person name="Nierman W.C."/>
            <person name="Yu J."/>
            <person name="Fedorova-Abrams N.D."/>
            <person name="Losada L."/>
            <person name="Cleveland T.E."/>
            <person name="Bhatnagar D."/>
            <person name="Bennett J.W."/>
            <person name="Dean R."/>
            <person name="Payne G.A."/>
        </authorList>
    </citation>
    <scope>NUCLEOTIDE SEQUENCE [LARGE SCALE GENOMIC DNA]</scope>
    <source>
        <strain>ATCC 200026 / FGSC A1120 / IAM 13836 / NRRL 3357 / JCM 12722 / SRRC 167</strain>
    </source>
</reference>
<reference key="2">
    <citation type="journal article" date="2015" name="BMC Microbiol.">
        <title>Deep sequencing analysis of transcriptomes in Aspergillus flavus in response to resveratrol.</title>
        <authorList>
            <person name="Wang H."/>
            <person name="Lei Y."/>
            <person name="Yan L."/>
            <person name="Cheng K."/>
            <person name="Dai X."/>
            <person name="Wan L."/>
            <person name="Guo W."/>
            <person name="Cheng L."/>
            <person name="Liao B."/>
        </authorList>
    </citation>
    <scope>INDUCTION</scope>
</reference>
<name>STUA_ASPFN</name>
<organism>
    <name type="scientific">Aspergillus flavus (strain ATCC 200026 / FGSC A1120 / IAM 13836 / NRRL 3357 / JCM 12722 / SRRC 167)</name>
    <dbReference type="NCBI Taxonomy" id="332952"/>
    <lineage>
        <taxon>Eukaryota</taxon>
        <taxon>Fungi</taxon>
        <taxon>Dikarya</taxon>
        <taxon>Ascomycota</taxon>
        <taxon>Pezizomycotina</taxon>
        <taxon>Eurotiomycetes</taxon>
        <taxon>Eurotiomycetidae</taxon>
        <taxon>Eurotiales</taxon>
        <taxon>Aspergillaceae</taxon>
        <taxon>Aspergillus</taxon>
        <taxon>Aspergillus subgen. Circumdati</taxon>
    </lineage>
</organism>
<evidence type="ECO:0000250" key="1">
    <source>
        <dbReference type="UniProtKB" id="P36011"/>
    </source>
</evidence>
<evidence type="ECO:0000255" key="2">
    <source>
        <dbReference type="PROSITE-ProRule" id="PRU00630"/>
    </source>
</evidence>
<evidence type="ECO:0000256" key="3">
    <source>
        <dbReference type="SAM" id="MobiDB-lite"/>
    </source>
</evidence>
<evidence type="ECO:0000269" key="4">
    <source>
    </source>
</evidence>
<evidence type="ECO:0000303" key="5">
    <source>
    </source>
</evidence>
<evidence type="ECO:0000305" key="6"/>